<keyword id="KW-0067">ATP-binding</keyword>
<keyword id="KW-0963">Cytoplasm</keyword>
<keyword id="KW-0378">Hydrolase</keyword>
<keyword id="KW-0547">Nucleotide-binding</keyword>
<keyword id="KW-0645">Protease</keyword>
<keyword id="KW-0720">Serine protease</keyword>
<keyword id="KW-0346">Stress response</keyword>
<gene>
    <name evidence="1" type="primary">lon</name>
    <name type="ordered locus">PGN_0662</name>
</gene>
<protein>
    <recommendedName>
        <fullName evidence="1">Lon protease</fullName>
        <ecNumber evidence="1">3.4.21.53</ecNumber>
    </recommendedName>
    <alternativeName>
        <fullName evidence="1">ATP-dependent protease La</fullName>
    </alternativeName>
</protein>
<comment type="function">
    <text evidence="1">ATP-dependent serine protease that mediates the selective degradation of mutant and abnormal proteins as well as certain short-lived regulatory proteins. Required for cellular homeostasis and for survival from DNA damage and developmental changes induced by stress. Degrades polypeptides processively to yield small peptide fragments that are 5 to 10 amino acids long. Binds to DNA in a double-stranded, site-specific manner.</text>
</comment>
<comment type="catalytic activity">
    <reaction evidence="1">
        <text>Hydrolysis of proteins in presence of ATP.</text>
        <dbReference type="EC" id="3.4.21.53"/>
    </reaction>
</comment>
<comment type="subunit">
    <text evidence="1">Homohexamer. Organized in a ring with a central cavity.</text>
</comment>
<comment type="subcellular location">
    <subcellularLocation>
        <location evidence="1">Cytoplasm</location>
    </subcellularLocation>
</comment>
<comment type="induction">
    <text evidence="1">By heat shock.</text>
</comment>
<comment type="similarity">
    <text evidence="1">Belongs to the peptidase S16 family.</text>
</comment>
<sequence>MIDRKYIRLGEDDEDDGFPVFFPVLSVCEEDEDFKVKEDHMQEEMPILALRNMILFPGVAMPIMVGREKSLKLIRYVEKKGVYFGAVSQRDMDVEEPDRADLYDVGVVAEIIRVLEMPDGTTTAIVQGRQRFALQEITATEPFMKGRVKLLPDILPGKNKDHEFEALVSTIQDMSLKMMELMVERPPRELILSMRRNKNPMYQINFASANISTSIAVKQELLEISKMKDRGYRLLYLLHKELQVMELKASIQMKTREEMDKQQKEYFLQQQIKTIQEELGGNINDIEVQELRTKATTMKWSSEVAETFEKELRKLERLHPQSPDYSVQMQYVQTIISLPWGVFSKDNFNLKRAQSVLDRDHFGLEKVKERIIEHLAVLKMKGDMKSPIICLYGPPGVGKTSLGKSIAESLGRKYVRISLGGLHDEAEIRGHRRTYIGAMCGRIIQSLQRAGTSNPVFVLDEIDKIDSDYKGDPSSALLEVLDPEQNNAFHDNYLDIDFDLSHVLFIATANSLSSISRPLLDRMELIDVSGYIIEEKVEIAARHLIPKQLVEHGFRKNDIKFSKKTIEKLIDDYTRESGVRTLEKQIAAVIRKITKEAAMNVVHTTKVEPSDLVTFLGAPRYTRDRYQGNGDAGVVIGLAWTSVGGEILFIETSLHRGREPKLTLTGNLGDVMKESAVIALDYIRAHSDELGISQEIFNNWQVHVHVPEGAIPKDGPSAGITMVTSLVSALTRRKVRAGIAMTGEITLRGKVLPVGGIKEKILAAKRSGITEIILCEENRKDIEEINDIYLKGLKFHYVSNINEVLKEALLEEKVIDTTDIYSFGKKTEEEKAEKVEKTEKKQRKK</sequence>
<evidence type="ECO:0000255" key="1">
    <source>
        <dbReference type="HAMAP-Rule" id="MF_01973"/>
    </source>
</evidence>
<evidence type="ECO:0000255" key="2">
    <source>
        <dbReference type="PROSITE-ProRule" id="PRU01122"/>
    </source>
</evidence>
<evidence type="ECO:0000255" key="3">
    <source>
        <dbReference type="PROSITE-ProRule" id="PRU01123"/>
    </source>
</evidence>
<dbReference type="EC" id="3.4.21.53" evidence="1"/>
<dbReference type="EMBL" id="AP009380">
    <property type="protein sequence ID" value="BAG33181.1"/>
    <property type="molecule type" value="Genomic_DNA"/>
</dbReference>
<dbReference type="RefSeq" id="WP_012457682.1">
    <property type="nucleotide sequence ID" value="NC_010729.1"/>
</dbReference>
<dbReference type="SMR" id="B2RII6"/>
<dbReference type="GeneID" id="29255885"/>
<dbReference type="KEGG" id="pgn:PGN_0662"/>
<dbReference type="eggNOG" id="COG0466">
    <property type="taxonomic scope" value="Bacteria"/>
</dbReference>
<dbReference type="HOGENOM" id="CLU_004109_4_3_10"/>
<dbReference type="OrthoDB" id="9803599at2"/>
<dbReference type="BioCyc" id="PGIN431947:G1G2V-727-MONOMER"/>
<dbReference type="Proteomes" id="UP000008842">
    <property type="component" value="Chromosome"/>
</dbReference>
<dbReference type="GO" id="GO:0005737">
    <property type="term" value="C:cytoplasm"/>
    <property type="evidence" value="ECO:0007669"/>
    <property type="project" value="UniProtKB-SubCell"/>
</dbReference>
<dbReference type="GO" id="GO:0005524">
    <property type="term" value="F:ATP binding"/>
    <property type="evidence" value="ECO:0007669"/>
    <property type="project" value="UniProtKB-UniRule"/>
</dbReference>
<dbReference type="GO" id="GO:0016887">
    <property type="term" value="F:ATP hydrolysis activity"/>
    <property type="evidence" value="ECO:0007669"/>
    <property type="project" value="UniProtKB-UniRule"/>
</dbReference>
<dbReference type="GO" id="GO:0004176">
    <property type="term" value="F:ATP-dependent peptidase activity"/>
    <property type="evidence" value="ECO:0007669"/>
    <property type="project" value="UniProtKB-UniRule"/>
</dbReference>
<dbReference type="GO" id="GO:0043565">
    <property type="term" value="F:sequence-specific DNA binding"/>
    <property type="evidence" value="ECO:0007669"/>
    <property type="project" value="UniProtKB-UniRule"/>
</dbReference>
<dbReference type="GO" id="GO:0004252">
    <property type="term" value="F:serine-type endopeptidase activity"/>
    <property type="evidence" value="ECO:0007669"/>
    <property type="project" value="UniProtKB-UniRule"/>
</dbReference>
<dbReference type="GO" id="GO:0034605">
    <property type="term" value="P:cellular response to heat"/>
    <property type="evidence" value="ECO:0007669"/>
    <property type="project" value="UniProtKB-UniRule"/>
</dbReference>
<dbReference type="GO" id="GO:0006515">
    <property type="term" value="P:protein quality control for misfolded or incompletely synthesized proteins"/>
    <property type="evidence" value="ECO:0007669"/>
    <property type="project" value="UniProtKB-UniRule"/>
</dbReference>
<dbReference type="CDD" id="cd19500">
    <property type="entry name" value="RecA-like_Lon"/>
    <property type="match status" value="1"/>
</dbReference>
<dbReference type="FunFam" id="3.40.50.300:FF:000021">
    <property type="entry name" value="Lon protease homolog"/>
    <property type="match status" value="1"/>
</dbReference>
<dbReference type="Gene3D" id="1.10.8.60">
    <property type="match status" value="1"/>
</dbReference>
<dbReference type="Gene3D" id="1.20.5.5270">
    <property type="match status" value="1"/>
</dbReference>
<dbReference type="Gene3D" id="1.20.58.1480">
    <property type="match status" value="1"/>
</dbReference>
<dbReference type="Gene3D" id="3.30.230.10">
    <property type="match status" value="1"/>
</dbReference>
<dbReference type="Gene3D" id="2.30.130.40">
    <property type="entry name" value="LON domain-like"/>
    <property type="match status" value="1"/>
</dbReference>
<dbReference type="Gene3D" id="3.40.50.300">
    <property type="entry name" value="P-loop containing nucleotide triphosphate hydrolases"/>
    <property type="match status" value="1"/>
</dbReference>
<dbReference type="HAMAP" id="MF_01973">
    <property type="entry name" value="lon_bact"/>
    <property type="match status" value="1"/>
</dbReference>
<dbReference type="InterPro" id="IPR003593">
    <property type="entry name" value="AAA+_ATPase"/>
</dbReference>
<dbReference type="InterPro" id="IPR003959">
    <property type="entry name" value="ATPase_AAA_core"/>
</dbReference>
<dbReference type="InterPro" id="IPR027543">
    <property type="entry name" value="Lon_bac"/>
</dbReference>
<dbReference type="InterPro" id="IPR004815">
    <property type="entry name" value="Lon_bac/euk-typ"/>
</dbReference>
<dbReference type="InterPro" id="IPR054594">
    <property type="entry name" value="Lon_lid"/>
</dbReference>
<dbReference type="InterPro" id="IPR008269">
    <property type="entry name" value="Lon_proteolytic"/>
</dbReference>
<dbReference type="InterPro" id="IPR027065">
    <property type="entry name" value="Lon_Prtase"/>
</dbReference>
<dbReference type="InterPro" id="IPR003111">
    <property type="entry name" value="Lon_prtase_N"/>
</dbReference>
<dbReference type="InterPro" id="IPR046336">
    <property type="entry name" value="Lon_prtase_N_sf"/>
</dbReference>
<dbReference type="InterPro" id="IPR027417">
    <property type="entry name" value="P-loop_NTPase"/>
</dbReference>
<dbReference type="InterPro" id="IPR008268">
    <property type="entry name" value="Peptidase_S16_AS"/>
</dbReference>
<dbReference type="InterPro" id="IPR015947">
    <property type="entry name" value="PUA-like_sf"/>
</dbReference>
<dbReference type="InterPro" id="IPR020568">
    <property type="entry name" value="Ribosomal_Su5_D2-typ_SF"/>
</dbReference>
<dbReference type="InterPro" id="IPR014721">
    <property type="entry name" value="Ribsml_uS5_D2-typ_fold_subgr"/>
</dbReference>
<dbReference type="NCBIfam" id="TIGR00763">
    <property type="entry name" value="lon"/>
    <property type="match status" value="1"/>
</dbReference>
<dbReference type="PANTHER" id="PTHR10046">
    <property type="entry name" value="ATP DEPENDENT LON PROTEASE FAMILY MEMBER"/>
    <property type="match status" value="1"/>
</dbReference>
<dbReference type="Pfam" id="PF00004">
    <property type="entry name" value="AAA"/>
    <property type="match status" value="1"/>
</dbReference>
<dbReference type="Pfam" id="PF05362">
    <property type="entry name" value="Lon_C"/>
    <property type="match status" value="1"/>
</dbReference>
<dbReference type="Pfam" id="PF22667">
    <property type="entry name" value="Lon_lid"/>
    <property type="match status" value="1"/>
</dbReference>
<dbReference type="Pfam" id="PF02190">
    <property type="entry name" value="LON_substr_bdg"/>
    <property type="match status" value="1"/>
</dbReference>
<dbReference type="PIRSF" id="PIRSF001174">
    <property type="entry name" value="Lon_proteas"/>
    <property type="match status" value="1"/>
</dbReference>
<dbReference type="PRINTS" id="PR00830">
    <property type="entry name" value="ENDOLAPTASE"/>
</dbReference>
<dbReference type="SMART" id="SM00382">
    <property type="entry name" value="AAA"/>
    <property type="match status" value="1"/>
</dbReference>
<dbReference type="SMART" id="SM00464">
    <property type="entry name" value="LON"/>
    <property type="match status" value="1"/>
</dbReference>
<dbReference type="SUPFAM" id="SSF52540">
    <property type="entry name" value="P-loop containing nucleoside triphosphate hydrolases"/>
    <property type="match status" value="1"/>
</dbReference>
<dbReference type="SUPFAM" id="SSF88697">
    <property type="entry name" value="PUA domain-like"/>
    <property type="match status" value="1"/>
</dbReference>
<dbReference type="SUPFAM" id="SSF54211">
    <property type="entry name" value="Ribosomal protein S5 domain 2-like"/>
    <property type="match status" value="1"/>
</dbReference>
<dbReference type="PROSITE" id="PS51787">
    <property type="entry name" value="LON_N"/>
    <property type="match status" value="1"/>
</dbReference>
<dbReference type="PROSITE" id="PS51786">
    <property type="entry name" value="LON_PROTEOLYTIC"/>
    <property type="match status" value="1"/>
</dbReference>
<dbReference type="PROSITE" id="PS01046">
    <property type="entry name" value="LON_SER"/>
    <property type="match status" value="1"/>
</dbReference>
<reference key="1">
    <citation type="journal article" date="2008" name="DNA Res.">
        <title>Determination of the genome sequence of Porphyromonas gingivalis strain ATCC 33277 and genomic comparison with strain W83 revealed extensive genome rearrangements in P. gingivalis.</title>
        <authorList>
            <person name="Naito M."/>
            <person name="Hirakawa H."/>
            <person name="Yamashita A."/>
            <person name="Ohara N."/>
            <person name="Shoji M."/>
            <person name="Yukitake H."/>
            <person name="Nakayama K."/>
            <person name="Toh H."/>
            <person name="Yoshimura F."/>
            <person name="Kuhara S."/>
            <person name="Hattori M."/>
            <person name="Hayashi T."/>
            <person name="Nakayama K."/>
        </authorList>
    </citation>
    <scope>NUCLEOTIDE SEQUENCE [LARGE SCALE GENOMIC DNA]</scope>
    <source>
        <strain>ATCC 33277 / DSM 20709 / CIP 103683 / JCM 12257 / NCTC 11834 / 2561</strain>
    </source>
</reference>
<accession>B2RII6</accession>
<proteinExistence type="inferred from homology"/>
<organism>
    <name type="scientific">Porphyromonas gingivalis (strain ATCC 33277 / DSM 20709 / CIP 103683 / JCM 12257 / NCTC 11834 / 2561)</name>
    <dbReference type="NCBI Taxonomy" id="431947"/>
    <lineage>
        <taxon>Bacteria</taxon>
        <taxon>Pseudomonadati</taxon>
        <taxon>Bacteroidota</taxon>
        <taxon>Bacteroidia</taxon>
        <taxon>Bacteroidales</taxon>
        <taxon>Porphyromonadaceae</taxon>
        <taxon>Porphyromonas</taxon>
    </lineage>
</organism>
<feature type="chain" id="PRO_0000396593" description="Lon protease">
    <location>
        <begin position="1"/>
        <end position="845"/>
    </location>
</feature>
<feature type="domain" description="Lon N-terminal" evidence="3">
    <location>
        <begin position="45"/>
        <end position="242"/>
    </location>
</feature>
<feature type="domain" description="Lon proteolytic" evidence="2">
    <location>
        <begin position="629"/>
        <end position="811"/>
    </location>
</feature>
<feature type="active site" evidence="1">
    <location>
        <position position="717"/>
    </location>
</feature>
<feature type="active site" evidence="1">
    <location>
        <position position="760"/>
    </location>
</feature>
<feature type="binding site" evidence="1">
    <location>
        <begin position="393"/>
        <end position="400"/>
    </location>
    <ligand>
        <name>ATP</name>
        <dbReference type="ChEBI" id="CHEBI:30616"/>
    </ligand>
</feature>
<name>LON_PORG3</name>